<keyword id="KW-0694">RNA-binding</keyword>
<keyword id="KW-0804">Transcription</keyword>
<keyword id="KW-0889">Transcription antitermination</keyword>
<keyword id="KW-0805">Transcription regulation</keyword>
<dbReference type="EMBL" id="AJ965256">
    <property type="protein sequence ID" value="CAI83285.1"/>
    <property type="molecule type" value="Genomic_DNA"/>
</dbReference>
<dbReference type="RefSeq" id="WP_011309636.1">
    <property type="nucleotide sequence ID" value="NC_007356.1"/>
</dbReference>
<dbReference type="SMR" id="Q3ZYI9"/>
<dbReference type="KEGG" id="deh:cbdbA1206"/>
<dbReference type="HOGENOM" id="CLU_087843_3_3_0"/>
<dbReference type="Proteomes" id="UP000000433">
    <property type="component" value="Chromosome"/>
</dbReference>
<dbReference type="GO" id="GO:0005829">
    <property type="term" value="C:cytosol"/>
    <property type="evidence" value="ECO:0007669"/>
    <property type="project" value="TreeGrafter"/>
</dbReference>
<dbReference type="GO" id="GO:0003723">
    <property type="term" value="F:RNA binding"/>
    <property type="evidence" value="ECO:0007669"/>
    <property type="project" value="UniProtKB-UniRule"/>
</dbReference>
<dbReference type="GO" id="GO:0006353">
    <property type="term" value="P:DNA-templated transcription termination"/>
    <property type="evidence" value="ECO:0007669"/>
    <property type="project" value="UniProtKB-UniRule"/>
</dbReference>
<dbReference type="GO" id="GO:0031564">
    <property type="term" value="P:transcription antitermination"/>
    <property type="evidence" value="ECO:0007669"/>
    <property type="project" value="UniProtKB-KW"/>
</dbReference>
<dbReference type="Gene3D" id="1.10.940.10">
    <property type="entry name" value="NusB-like"/>
    <property type="match status" value="1"/>
</dbReference>
<dbReference type="HAMAP" id="MF_00073">
    <property type="entry name" value="NusB"/>
    <property type="match status" value="1"/>
</dbReference>
<dbReference type="InterPro" id="IPR035926">
    <property type="entry name" value="NusB-like_sf"/>
</dbReference>
<dbReference type="InterPro" id="IPR011605">
    <property type="entry name" value="NusB_fam"/>
</dbReference>
<dbReference type="InterPro" id="IPR006027">
    <property type="entry name" value="NusB_RsmB_TIM44"/>
</dbReference>
<dbReference type="NCBIfam" id="TIGR01951">
    <property type="entry name" value="nusB"/>
    <property type="match status" value="1"/>
</dbReference>
<dbReference type="PANTHER" id="PTHR11078:SF3">
    <property type="entry name" value="ANTITERMINATION NUSB DOMAIN-CONTAINING PROTEIN"/>
    <property type="match status" value="1"/>
</dbReference>
<dbReference type="PANTHER" id="PTHR11078">
    <property type="entry name" value="N UTILIZATION SUBSTANCE PROTEIN B-RELATED"/>
    <property type="match status" value="1"/>
</dbReference>
<dbReference type="Pfam" id="PF01029">
    <property type="entry name" value="NusB"/>
    <property type="match status" value="1"/>
</dbReference>
<dbReference type="SUPFAM" id="SSF48013">
    <property type="entry name" value="NusB-like"/>
    <property type="match status" value="1"/>
</dbReference>
<comment type="function">
    <text evidence="1">Involved in transcription antitermination. Required for transcription of ribosomal RNA (rRNA) genes. Binds specifically to the boxA antiterminator sequence of the ribosomal RNA (rrn) operons.</text>
</comment>
<comment type="similarity">
    <text evidence="1">Belongs to the NusB family.</text>
</comment>
<sequence length="143" mass="16162">MTTSRRKAREIVLQALYEQDLAGHNAEDVLKRLLTENPQTEENVEFIFRLTNAVVKHKDLLDENIRQFASAWPVEQLSYIDRNVLRLAIFEIIHENDVPVKVAINEAVELAKSFGGNSSARFINGVLSSVSKALADTANQREE</sequence>
<evidence type="ECO:0000255" key="1">
    <source>
        <dbReference type="HAMAP-Rule" id="MF_00073"/>
    </source>
</evidence>
<proteinExistence type="inferred from homology"/>
<name>NUSB_DEHMC</name>
<accession>Q3ZYI9</accession>
<gene>
    <name evidence="1" type="primary">nusB</name>
    <name type="ordered locus">cbdbA1206</name>
</gene>
<organism>
    <name type="scientific">Dehalococcoides mccartyi (strain CBDB1)</name>
    <dbReference type="NCBI Taxonomy" id="255470"/>
    <lineage>
        <taxon>Bacteria</taxon>
        <taxon>Bacillati</taxon>
        <taxon>Chloroflexota</taxon>
        <taxon>Dehalococcoidia</taxon>
        <taxon>Dehalococcoidales</taxon>
        <taxon>Dehalococcoidaceae</taxon>
        <taxon>Dehalococcoides</taxon>
    </lineage>
</organism>
<protein>
    <recommendedName>
        <fullName evidence="1">Transcription antitermination protein NusB</fullName>
    </recommendedName>
    <alternativeName>
        <fullName evidence="1">Antitermination factor NusB</fullName>
    </alternativeName>
</protein>
<feature type="chain" id="PRO_0000265513" description="Transcription antitermination protein NusB">
    <location>
        <begin position="1"/>
        <end position="143"/>
    </location>
</feature>
<reference key="1">
    <citation type="journal article" date="2005" name="Nat. Biotechnol.">
        <title>Genome sequence of the chlorinated compound-respiring bacterium Dehalococcoides species strain CBDB1.</title>
        <authorList>
            <person name="Kube M."/>
            <person name="Beck A."/>
            <person name="Zinder S.H."/>
            <person name="Kuhl H."/>
            <person name="Reinhardt R."/>
            <person name="Adrian L."/>
        </authorList>
    </citation>
    <scope>NUCLEOTIDE SEQUENCE [LARGE SCALE GENOMIC DNA]</scope>
    <source>
        <strain>CBDB1</strain>
    </source>
</reference>